<keyword id="KW-1185">Reference proteome</keyword>
<name>Y3330_BDEBA</name>
<proteinExistence type="inferred from homology"/>
<reference key="1">
    <citation type="journal article" date="2004" name="Science">
        <title>A predator unmasked: life cycle of Bdellovibrio bacteriovorus from a genomic perspective.</title>
        <authorList>
            <person name="Rendulic S."/>
            <person name="Jagtap P."/>
            <person name="Rosinus A."/>
            <person name="Eppinger M."/>
            <person name="Baar C."/>
            <person name="Lanz C."/>
            <person name="Keller H."/>
            <person name="Lambert C."/>
            <person name="Evans K.J."/>
            <person name="Goesmann A."/>
            <person name="Meyer F."/>
            <person name="Sockett R.E."/>
            <person name="Schuster S.C."/>
        </authorList>
    </citation>
    <scope>NUCLEOTIDE SEQUENCE [LARGE SCALE GENOMIC DNA]</scope>
    <source>
        <strain>ATCC 15356 / DSM 50701 / NCIMB 9529 / HD100</strain>
    </source>
</reference>
<organism>
    <name type="scientific">Bdellovibrio bacteriovorus (strain ATCC 15356 / DSM 50701 / NCIMB 9529 / HD100)</name>
    <dbReference type="NCBI Taxonomy" id="264462"/>
    <lineage>
        <taxon>Bacteria</taxon>
        <taxon>Pseudomonadati</taxon>
        <taxon>Bdellovibrionota</taxon>
        <taxon>Bdellovibrionia</taxon>
        <taxon>Bdellovibrionales</taxon>
        <taxon>Pseudobdellovibrionaceae</taxon>
        <taxon>Bdellovibrio</taxon>
    </lineage>
</organism>
<evidence type="ECO:0000305" key="1"/>
<dbReference type="EMBL" id="BX842655">
    <property type="protein sequence ID" value="CAE78138.1"/>
    <property type="status" value="ALT_INIT"/>
    <property type="molecule type" value="Genomic_DNA"/>
</dbReference>
<dbReference type="RefSeq" id="WP_038448462.1">
    <property type="nucleotide sequence ID" value="NC_005363.1"/>
</dbReference>
<dbReference type="SMR" id="Q6MI44"/>
<dbReference type="STRING" id="264462.Bd3330"/>
<dbReference type="GeneID" id="93014157"/>
<dbReference type="KEGG" id="bba:Bd3330"/>
<dbReference type="eggNOG" id="COG3237">
    <property type="taxonomic scope" value="Bacteria"/>
</dbReference>
<dbReference type="HOGENOM" id="CLU_135567_4_1_7"/>
<dbReference type="Proteomes" id="UP000008080">
    <property type="component" value="Chromosome"/>
</dbReference>
<dbReference type="Gene3D" id="1.10.1470.10">
    <property type="entry name" value="YjbJ"/>
    <property type="match status" value="1"/>
</dbReference>
<dbReference type="InterPro" id="IPR008462">
    <property type="entry name" value="CsbD"/>
</dbReference>
<dbReference type="InterPro" id="IPR050423">
    <property type="entry name" value="UPF0337_stress_rsp"/>
</dbReference>
<dbReference type="InterPro" id="IPR036629">
    <property type="entry name" value="YjbJ_sf"/>
</dbReference>
<dbReference type="PANTHER" id="PTHR34977">
    <property type="entry name" value="UPF0337 PROTEIN YJBJ"/>
    <property type="match status" value="1"/>
</dbReference>
<dbReference type="PANTHER" id="PTHR34977:SF1">
    <property type="entry name" value="UPF0337 PROTEIN YJBJ"/>
    <property type="match status" value="1"/>
</dbReference>
<dbReference type="Pfam" id="PF05532">
    <property type="entry name" value="CsbD"/>
    <property type="match status" value="1"/>
</dbReference>
<dbReference type="SUPFAM" id="SSF69047">
    <property type="entry name" value="Hypothetical protein YjbJ"/>
    <property type="match status" value="1"/>
</dbReference>
<comment type="similarity">
    <text evidence="1">Belongs to the UPF0337 (CsbD) family.</text>
</comment>
<comment type="sequence caution" evidence="1">
    <conflict type="erroneous initiation">
        <sequence resource="EMBL-CDS" id="CAE78138"/>
    </conflict>
</comment>
<protein>
    <recommendedName>
        <fullName>UPF0337 protein Bd3330</fullName>
    </recommendedName>
</protein>
<accession>Q6MI44</accession>
<sequence length="93" mass="10332">MNKDIFQGKIKEISGELRKKWGALTDDDIQKTKGNMEALSGLVQQKIGLSKEEASKQLSEFMTDIDKKFTSTGESASDKVNSKIDAIKNKLSH</sequence>
<gene>
    <name type="ordered locus">Bd3330</name>
</gene>
<feature type="chain" id="PRO_0000209988" description="UPF0337 protein Bd3330">
    <location>
        <begin position="1"/>
        <end position="93"/>
    </location>
</feature>